<dbReference type="EMBL" id="CP000033">
    <property type="protein sequence ID" value="AAV42652.1"/>
    <property type="molecule type" value="Genomic_DNA"/>
</dbReference>
<dbReference type="RefSeq" id="WP_011254249.1">
    <property type="nucleotide sequence ID" value="NC_006814.3"/>
</dbReference>
<dbReference type="RefSeq" id="YP_193683.1">
    <property type="nucleotide sequence ID" value="NC_006814.3"/>
</dbReference>
<dbReference type="SMR" id="Q5FKX2"/>
<dbReference type="STRING" id="272621.LBA0786"/>
<dbReference type="GeneID" id="93290089"/>
<dbReference type="KEGG" id="lac:LBA0786"/>
<dbReference type="PATRIC" id="fig|272621.13.peg.750"/>
<dbReference type="eggNOG" id="COG0522">
    <property type="taxonomic scope" value="Bacteria"/>
</dbReference>
<dbReference type="HOGENOM" id="CLU_092403_0_1_9"/>
<dbReference type="OrthoDB" id="9803672at2"/>
<dbReference type="BioCyc" id="LACI272621:G1G49-802-MONOMER"/>
<dbReference type="Proteomes" id="UP000006381">
    <property type="component" value="Chromosome"/>
</dbReference>
<dbReference type="GO" id="GO:0015935">
    <property type="term" value="C:small ribosomal subunit"/>
    <property type="evidence" value="ECO:0007669"/>
    <property type="project" value="InterPro"/>
</dbReference>
<dbReference type="GO" id="GO:0019843">
    <property type="term" value="F:rRNA binding"/>
    <property type="evidence" value="ECO:0007669"/>
    <property type="project" value="UniProtKB-UniRule"/>
</dbReference>
<dbReference type="GO" id="GO:0003735">
    <property type="term" value="F:structural constituent of ribosome"/>
    <property type="evidence" value="ECO:0007669"/>
    <property type="project" value="InterPro"/>
</dbReference>
<dbReference type="GO" id="GO:0042274">
    <property type="term" value="P:ribosomal small subunit biogenesis"/>
    <property type="evidence" value="ECO:0007669"/>
    <property type="project" value="TreeGrafter"/>
</dbReference>
<dbReference type="GO" id="GO:0006412">
    <property type="term" value="P:translation"/>
    <property type="evidence" value="ECO:0007669"/>
    <property type="project" value="UniProtKB-UniRule"/>
</dbReference>
<dbReference type="CDD" id="cd00165">
    <property type="entry name" value="S4"/>
    <property type="match status" value="1"/>
</dbReference>
<dbReference type="FunFam" id="3.10.290.10:FF:000001">
    <property type="entry name" value="30S ribosomal protein S4"/>
    <property type="match status" value="1"/>
</dbReference>
<dbReference type="Gene3D" id="1.10.1050.10">
    <property type="entry name" value="Ribosomal Protein S4 Delta 41, Chain A, domain 1"/>
    <property type="match status" value="1"/>
</dbReference>
<dbReference type="Gene3D" id="3.10.290.10">
    <property type="entry name" value="RNA-binding S4 domain"/>
    <property type="match status" value="1"/>
</dbReference>
<dbReference type="HAMAP" id="MF_01306_B">
    <property type="entry name" value="Ribosomal_uS4_B"/>
    <property type="match status" value="1"/>
</dbReference>
<dbReference type="InterPro" id="IPR022801">
    <property type="entry name" value="Ribosomal_uS4"/>
</dbReference>
<dbReference type="InterPro" id="IPR005709">
    <property type="entry name" value="Ribosomal_uS4_bac-type"/>
</dbReference>
<dbReference type="InterPro" id="IPR018079">
    <property type="entry name" value="Ribosomal_uS4_CS"/>
</dbReference>
<dbReference type="InterPro" id="IPR001912">
    <property type="entry name" value="Ribosomal_uS4_N"/>
</dbReference>
<dbReference type="InterPro" id="IPR002942">
    <property type="entry name" value="S4_RNA-bd"/>
</dbReference>
<dbReference type="InterPro" id="IPR036986">
    <property type="entry name" value="S4_RNA-bd_sf"/>
</dbReference>
<dbReference type="NCBIfam" id="NF003717">
    <property type="entry name" value="PRK05327.1"/>
    <property type="match status" value="1"/>
</dbReference>
<dbReference type="NCBIfam" id="TIGR01017">
    <property type="entry name" value="rpsD_bact"/>
    <property type="match status" value="1"/>
</dbReference>
<dbReference type="PANTHER" id="PTHR11831">
    <property type="entry name" value="30S 40S RIBOSOMAL PROTEIN"/>
    <property type="match status" value="1"/>
</dbReference>
<dbReference type="PANTHER" id="PTHR11831:SF4">
    <property type="entry name" value="SMALL RIBOSOMAL SUBUNIT PROTEIN US4M"/>
    <property type="match status" value="1"/>
</dbReference>
<dbReference type="Pfam" id="PF00163">
    <property type="entry name" value="Ribosomal_S4"/>
    <property type="match status" value="1"/>
</dbReference>
<dbReference type="Pfam" id="PF01479">
    <property type="entry name" value="S4"/>
    <property type="match status" value="1"/>
</dbReference>
<dbReference type="SMART" id="SM01390">
    <property type="entry name" value="Ribosomal_S4"/>
    <property type="match status" value="1"/>
</dbReference>
<dbReference type="SMART" id="SM00363">
    <property type="entry name" value="S4"/>
    <property type="match status" value="1"/>
</dbReference>
<dbReference type="SUPFAM" id="SSF55174">
    <property type="entry name" value="Alpha-L RNA-binding motif"/>
    <property type="match status" value="1"/>
</dbReference>
<dbReference type="PROSITE" id="PS00632">
    <property type="entry name" value="RIBOSOMAL_S4"/>
    <property type="match status" value="1"/>
</dbReference>
<dbReference type="PROSITE" id="PS50889">
    <property type="entry name" value="S4"/>
    <property type="match status" value="1"/>
</dbReference>
<organism>
    <name type="scientific">Lactobacillus acidophilus (strain ATCC 700396 / NCK56 / N2 / NCFM)</name>
    <dbReference type="NCBI Taxonomy" id="272621"/>
    <lineage>
        <taxon>Bacteria</taxon>
        <taxon>Bacillati</taxon>
        <taxon>Bacillota</taxon>
        <taxon>Bacilli</taxon>
        <taxon>Lactobacillales</taxon>
        <taxon>Lactobacillaceae</taxon>
        <taxon>Lactobacillus</taxon>
    </lineage>
</organism>
<accession>Q5FKX2</accession>
<name>RS4_LACAC</name>
<protein>
    <recommendedName>
        <fullName evidence="1">Small ribosomal subunit protein uS4</fullName>
    </recommendedName>
    <alternativeName>
        <fullName evidence="2">30S ribosomal protein S4</fullName>
    </alternativeName>
</protein>
<reference key="1">
    <citation type="journal article" date="2005" name="Proc. Natl. Acad. Sci. U.S.A.">
        <title>Complete genome sequence of the probiotic lactic acid bacterium Lactobacillus acidophilus NCFM.</title>
        <authorList>
            <person name="Altermann E."/>
            <person name="Russell W.M."/>
            <person name="Azcarate-Peril M.A."/>
            <person name="Barrangou R."/>
            <person name="Buck B.L."/>
            <person name="McAuliffe O."/>
            <person name="Souther N."/>
            <person name="Dobson A."/>
            <person name="Duong T."/>
            <person name="Callanan M."/>
            <person name="Lick S."/>
            <person name="Hamrick A."/>
            <person name="Cano R."/>
            <person name="Klaenhammer T.R."/>
        </authorList>
    </citation>
    <scope>NUCLEOTIDE SEQUENCE [LARGE SCALE GENOMIC DNA]</scope>
    <source>
        <strain>ATCC 700396 / NCK56 / N2 / NCFM</strain>
    </source>
</reference>
<sequence>MSRYTGPSWKRSRRLGISLSGTGKELARRNYAPGQHGPNSRGRLSEYGQQLHEKQKLRWMYGLNERQFRTLFIRAGKIREGQHGINFMILLERRLDSIVYRLGLATTREQARQLVNHGHITVDGKRVDIPSYEVSVGQTIGLKDKSKNLQQIRDALEATTARPSFVSFDENKMEGTLVRLPERDEMEPEIDESLVVEWYNKLL</sequence>
<evidence type="ECO:0000255" key="1">
    <source>
        <dbReference type="HAMAP-Rule" id="MF_01306"/>
    </source>
</evidence>
<evidence type="ECO:0000305" key="2"/>
<proteinExistence type="inferred from homology"/>
<keyword id="KW-1185">Reference proteome</keyword>
<keyword id="KW-0687">Ribonucleoprotein</keyword>
<keyword id="KW-0689">Ribosomal protein</keyword>
<keyword id="KW-0694">RNA-binding</keyword>
<keyword id="KW-0699">rRNA-binding</keyword>
<feature type="chain" id="PRO_0000228898" description="Small ribosomal subunit protein uS4">
    <location>
        <begin position="1"/>
        <end position="203"/>
    </location>
</feature>
<feature type="domain" description="S4 RNA-binding" evidence="1">
    <location>
        <begin position="93"/>
        <end position="155"/>
    </location>
</feature>
<gene>
    <name evidence="1" type="primary">rpsD</name>
    <name type="ordered locus">LBA0786</name>
</gene>
<comment type="function">
    <text evidence="1">One of the primary rRNA binding proteins, it binds directly to 16S rRNA where it nucleates assembly of the body of the 30S subunit.</text>
</comment>
<comment type="function">
    <text evidence="1">With S5 and S12 plays an important role in translational accuracy.</text>
</comment>
<comment type="subunit">
    <text evidence="1">Part of the 30S ribosomal subunit. Contacts protein S5. The interaction surface between S4 and S5 is involved in control of translational fidelity.</text>
</comment>
<comment type="similarity">
    <text evidence="1">Belongs to the universal ribosomal protein uS4 family.</text>
</comment>